<name>NUOB_THIDA</name>
<comment type="function">
    <text evidence="1">NDH-1 shuttles electrons from NADH, via FMN and iron-sulfur (Fe-S) centers, to quinones in the respiratory chain. The immediate electron acceptor for the enzyme in this species is believed to be ubiquinone. Couples the redox reaction to proton translocation (for every two electrons transferred, four hydrogen ions are translocated across the cytoplasmic membrane), and thus conserves the redox energy in a proton gradient.</text>
</comment>
<comment type="catalytic activity">
    <reaction evidence="1">
        <text>a quinone + NADH + 5 H(+)(in) = a quinol + NAD(+) + 4 H(+)(out)</text>
        <dbReference type="Rhea" id="RHEA:57888"/>
        <dbReference type="ChEBI" id="CHEBI:15378"/>
        <dbReference type="ChEBI" id="CHEBI:24646"/>
        <dbReference type="ChEBI" id="CHEBI:57540"/>
        <dbReference type="ChEBI" id="CHEBI:57945"/>
        <dbReference type="ChEBI" id="CHEBI:132124"/>
    </reaction>
</comment>
<comment type="cofactor">
    <cofactor evidence="1">
        <name>[4Fe-4S] cluster</name>
        <dbReference type="ChEBI" id="CHEBI:49883"/>
    </cofactor>
    <text evidence="1">Binds 1 [4Fe-4S] cluster.</text>
</comment>
<comment type="subunit">
    <text evidence="1">NDH-1 is composed of 14 different subunits. Subunits NuoB, C, D, E, F, and G constitute the peripheral sector of the complex.</text>
</comment>
<comment type="subcellular location">
    <subcellularLocation>
        <location evidence="1">Cell inner membrane</location>
        <topology evidence="1">Peripheral membrane protein</topology>
        <orientation evidence="1">Cytoplasmic side</orientation>
    </subcellularLocation>
</comment>
<comment type="similarity">
    <text evidence="1">Belongs to the complex I 20 kDa subunit family.</text>
</comment>
<protein>
    <recommendedName>
        <fullName evidence="1">NADH-quinone oxidoreductase subunit B</fullName>
        <ecNumber evidence="1">7.1.1.-</ecNumber>
    </recommendedName>
    <alternativeName>
        <fullName evidence="1">NADH dehydrogenase I subunit B</fullName>
    </alternativeName>
    <alternativeName>
        <fullName evidence="1">NDH-1 subunit B</fullName>
    </alternativeName>
</protein>
<gene>
    <name evidence="1" type="primary">nuoB</name>
    <name type="ordered locus">Tbd_1143</name>
</gene>
<reference key="1">
    <citation type="journal article" date="2006" name="J. Bacteriol.">
        <title>The genome sequence of the obligately chemolithoautotrophic, facultatively anaerobic bacterium Thiobacillus denitrificans.</title>
        <authorList>
            <person name="Beller H.R."/>
            <person name="Chain P.S."/>
            <person name="Letain T.E."/>
            <person name="Chakicherla A."/>
            <person name="Larimer F.W."/>
            <person name="Richardson P.M."/>
            <person name="Coleman M.A."/>
            <person name="Wood A.P."/>
            <person name="Kelly D.P."/>
        </authorList>
    </citation>
    <scope>NUCLEOTIDE SEQUENCE [LARGE SCALE GENOMIC DNA]</scope>
    <source>
        <strain>ATCC 25259 / T1</strain>
    </source>
</reference>
<organism>
    <name type="scientific">Thiobacillus denitrificans (strain ATCC 25259 / T1)</name>
    <dbReference type="NCBI Taxonomy" id="292415"/>
    <lineage>
        <taxon>Bacteria</taxon>
        <taxon>Pseudomonadati</taxon>
        <taxon>Pseudomonadota</taxon>
        <taxon>Betaproteobacteria</taxon>
        <taxon>Nitrosomonadales</taxon>
        <taxon>Thiobacillaceae</taxon>
        <taxon>Thiobacillus</taxon>
    </lineage>
</organism>
<dbReference type="EC" id="7.1.1.-" evidence="1"/>
<dbReference type="EMBL" id="CP000116">
    <property type="protein sequence ID" value="AAZ97096.1"/>
    <property type="molecule type" value="Genomic_DNA"/>
</dbReference>
<dbReference type="RefSeq" id="WP_011311655.1">
    <property type="nucleotide sequence ID" value="NC_007404.1"/>
</dbReference>
<dbReference type="SMR" id="Q3SEX7"/>
<dbReference type="STRING" id="292415.Tbd_1143"/>
<dbReference type="KEGG" id="tbd:Tbd_1143"/>
<dbReference type="eggNOG" id="COG0377">
    <property type="taxonomic scope" value="Bacteria"/>
</dbReference>
<dbReference type="HOGENOM" id="CLU_055737_7_3_4"/>
<dbReference type="OrthoDB" id="9786737at2"/>
<dbReference type="Proteomes" id="UP000008291">
    <property type="component" value="Chromosome"/>
</dbReference>
<dbReference type="GO" id="GO:0005886">
    <property type="term" value="C:plasma membrane"/>
    <property type="evidence" value="ECO:0007669"/>
    <property type="project" value="UniProtKB-SubCell"/>
</dbReference>
<dbReference type="GO" id="GO:0045271">
    <property type="term" value="C:respiratory chain complex I"/>
    <property type="evidence" value="ECO:0007669"/>
    <property type="project" value="TreeGrafter"/>
</dbReference>
<dbReference type="GO" id="GO:0051539">
    <property type="term" value="F:4 iron, 4 sulfur cluster binding"/>
    <property type="evidence" value="ECO:0007669"/>
    <property type="project" value="UniProtKB-KW"/>
</dbReference>
<dbReference type="GO" id="GO:0005506">
    <property type="term" value="F:iron ion binding"/>
    <property type="evidence" value="ECO:0007669"/>
    <property type="project" value="UniProtKB-UniRule"/>
</dbReference>
<dbReference type="GO" id="GO:0008137">
    <property type="term" value="F:NADH dehydrogenase (ubiquinone) activity"/>
    <property type="evidence" value="ECO:0007669"/>
    <property type="project" value="InterPro"/>
</dbReference>
<dbReference type="GO" id="GO:0050136">
    <property type="term" value="F:NADH:ubiquinone reductase (non-electrogenic) activity"/>
    <property type="evidence" value="ECO:0007669"/>
    <property type="project" value="UniProtKB-UniRule"/>
</dbReference>
<dbReference type="GO" id="GO:0048038">
    <property type="term" value="F:quinone binding"/>
    <property type="evidence" value="ECO:0007669"/>
    <property type="project" value="UniProtKB-KW"/>
</dbReference>
<dbReference type="GO" id="GO:0009060">
    <property type="term" value="P:aerobic respiration"/>
    <property type="evidence" value="ECO:0007669"/>
    <property type="project" value="TreeGrafter"/>
</dbReference>
<dbReference type="GO" id="GO:0015990">
    <property type="term" value="P:electron transport coupled proton transport"/>
    <property type="evidence" value="ECO:0007669"/>
    <property type="project" value="TreeGrafter"/>
</dbReference>
<dbReference type="FunFam" id="3.40.50.12280:FF:000001">
    <property type="entry name" value="NADH-quinone oxidoreductase subunit B 2"/>
    <property type="match status" value="1"/>
</dbReference>
<dbReference type="Gene3D" id="3.40.50.12280">
    <property type="match status" value="1"/>
</dbReference>
<dbReference type="HAMAP" id="MF_01356">
    <property type="entry name" value="NDH1_NuoB"/>
    <property type="match status" value="1"/>
</dbReference>
<dbReference type="InterPro" id="IPR006137">
    <property type="entry name" value="NADH_UbQ_OxRdtase-like_20kDa"/>
</dbReference>
<dbReference type="InterPro" id="IPR006138">
    <property type="entry name" value="NADH_UQ_OxRdtase_20Kd_su"/>
</dbReference>
<dbReference type="NCBIfam" id="TIGR01957">
    <property type="entry name" value="nuoB_fam"/>
    <property type="match status" value="1"/>
</dbReference>
<dbReference type="NCBIfam" id="NF005012">
    <property type="entry name" value="PRK06411.1"/>
    <property type="match status" value="1"/>
</dbReference>
<dbReference type="PANTHER" id="PTHR11995">
    <property type="entry name" value="NADH DEHYDROGENASE"/>
    <property type="match status" value="1"/>
</dbReference>
<dbReference type="PANTHER" id="PTHR11995:SF14">
    <property type="entry name" value="NADH DEHYDROGENASE [UBIQUINONE] IRON-SULFUR PROTEIN 7, MITOCHONDRIAL"/>
    <property type="match status" value="1"/>
</dbReference>
<dbReference type="Pfam" id="PF01058">
    <property type="entry name" value="Oxidored_q6"/>
    <property type="match status" value="1"/>
</dbReference>
<dbReference type="SUPFAM" id="SSF56770">
    <property type="entry name" value="HydA/Nqo6-like"/>
    <property type="match status" value="1"/>
</dbReference>
<dbReference type="PROSITE" id="PS01150">
    <property type="entry name" value="COMPLEX1_20K"/>
    <property type="match status" value="1"/>
</dbReference>
<accession>Q3SEX7</accession>
<proteinExistence type="inferred from homology"/>
<keyword id="KW-0004">4Fe-4S</keyword>
<keyword id="KW-0997">Cell inner membrane</keyword>
<keyword id="KW-1003">Cell membrane</keyword>
<keyword id="KW-0408">Iron</keyword>
<keyword id="KW-0411">Iron-sulfur</keyword>
<keyword id="KW-0472">Membrane</keyword>
<keyword id="KW-0479">Metal-binding</keyword>
<keyword id="KW-0520">NAD</keyword>
<keyword id="KW-0874">Quinone</keyword>
<keyword id="KW-1185">Reference proteome</keyword>
<keyword id="KW-1278">Translocase</keyword>
<keyword id="KW-0813">Transport</keyword>
<keyword id="KW-0830">Ubiquinone</keyword>
<sequence>MSIEGVLEQGFVTTKADQLINYMRTGSMWPMTFGLACCAVEMMQAGASRYDLDRFGIVFRPSPRQSDVMIVAGTLCNKMAPALRKVYDQMAEPRWVISMGSCANGGGYYHYSYSVVRGCDRIVPVDIYVPGCPPTAEALIFGIIQLQKKIRRTNTIAR</sequence>
<evidence type="ECO:0000255" key="1">
    <source>
        <dbReference type="HAMAP-Rule" id="MF_01356"/>
    </source>
</evidence>
<feature type="chain" id="PRO_0000376399" description="NADH-quinone oxidoreductase subunit B">
    <location>
        <begin position="1"/>
        <end position="158"/>
    </location>
</feature>
<feature type="binding site" evidence="1">
    <location>
        <position position="37"/>
    </location>
    <ligand>
        <name>[4Fe-4S] cluster</name>
        <dbReference type="ChEBI" id="CHEBI:49883"/>
    </ligand>
</feature>
<feature type="binding site" evidence="1">
    <location>
        <position position="38"/>
    </location>
    <ligand>
        <name>[4Fe-4S] cluster</name>
        <dbReference type="ChEBI" id="CHEBI:49883"/>
    </ligand>
</feature>
<feature type="binding site" evidence="1">
    <location>
        <position position="102"/>
    </location>
    <ligand>
        <name>[4Fe-4S] cluster</name>
        <dbReference type="ChEBI" id="CHEBI:49883"/>
    </ligand>
</feature>
<feature type="binding site" evidence="1">
    <location>
        <position position="132"/>
    </location>
    <ligand>
        <name>[4Fe-4S] cluster</name>
        <dbReference type="ChEBI" id="CHEBI:49883"/>
    </ligand>
</feature>